<reference key="1">
    <citation type="journal article" date="2009" name="PLoS Genet.">
        <title>Organised genome dynamics in the Escherichia coli species results in highly diverse adaptive paths.</title>
        <authorList>
            <person name="Touchon M."/>
            <person name="Hoede C."/>
            <person name="Tenaillon O."/>
            <person name="Barbe V."/>
            <person name="Baeriswyl S."/>
            <person name="Bidet P."/>
            <person name="Bingen E."/>
            <person name="Bonacorsi S."/>
            <person name="Bouchier C."/>
            <person name="Bouvet O."/>
            <person name="Calteau A."/>
            <person name="Chiapello H."/>
            <person name="Clermont O."/>
            <person name="Cruveiller S."/>
            <person name="Danchin A."/>
            <person name="Diard M."/>
            <person name="Dossat C."/>
            <person name="Karoui M.E."/>
            <person name="Frapy E."/>
            <person name="Garry L."/>
            <person name="Ghigo J.M."/>
            <person name="Gilles A.M."/>
            <person name="Johnson J."/>
            <person name="Le Bouguenec C."/>
            <person name="Lescat M."/>
            <person name="Mangenot S."/>
            <person name="Martinez-Jehanne V."/>
            <person name="Matic I."/>
            <person name="Nassif X."/>
            <person name="Oztas S."/>
            <person name="Petit M.A."/>
            <person name="Pichon C."/>
            <person name="Rouy Z."/>
            <person name="Ruf C.S."/>
            <person name="Schneider D."/>
            <person name="Tourret J."/>
            <person name="Vacherie B."/>
            <person name="Vallenet D."/>
            <person name="Medigue C."/>
            <person name="Rocha E.P.C."/>
            <person name="Denamur E."/>
        </authorList>
    </citation>
    <scope>NUCLEOTIDE SEQUENCE [LARGE SCALE GENOMIC DNA]</scope>
    <source>
        <strain>S88 / ExPEC</strain>
    </source>
</reference>
<gene>
    <name evidence="2" type="primary">arnE</name>
    <name type="ordered locus">ECS88_2408</name>
</gene>
<proteinExistence type="inferred from homology"/>
<evidence type="ECO:0000255" key="1"/>
<evidence type="ECO:0000255" key="2">
    <source>
        <dbReference type="HAMAP-Rule" id="MF_01869"/>
    </source>
</evidence>
<dbReference type="EMBL" id="CU928161">
    <property type="protein sequence ID" value="CAR03687.1"/>
    <property type="molecule type" value="Genomic_DNA"/>
</dbReference>
<dbReference type="RefSeq" id="WP_000638016.1">
    <property type="nucleotide sequence ID" value="NC_011742.1"/>
</dbReference>
<dbReference type="SMR" id="B7MG25"/>
<dbReference type="KEGG" id="ecz:ECS88_2408"/>
<dbReference type="HOGENOM" id="CLU_131462_5_1_6"/>
<dbReference type="UniPathway" id="UPA00030"/>
<dbReference type="Proteomes" id="UP000000747">
    <property type="component" value="Chromosome"/>
</dbReference>
<dbReference type="GO" id="GO:0005886">
    <property type="term" value="C:plasma membrane"/>
    <property type="evidence" value="ECO:0007669"/>
    <property type="project" value="UniProtKB-SubCell"/>
</dbReference>
<dbReference type="GO" id="GO:1901505">
    <property type="term" value="F:carbohydrate derivative transmembrane transporter activity"/>
    <property type="evidence" value="ECO:0007669"/>
    <property type="project" value="InterPro"/>
</dbReference>
<dbReference type="GO" id="GO:0009245">
    <property type="term" value="P:lipid A biosynthetic process"/>
    <property type="evidence" value="ECO:0007669"/>
    <property type="project" value="UniProtKB-UniRule"/>
</dbReference>
<dbReference type="GO" id="GO:0009103">
    <property type="term" value="P:lipopolysaccharide biosynthetic process"/>
    <property type="evidence" value="ECO:0007669"/>
    <property type="project" value="UniProtKB-UniRule"/>
</dbReference>
<dbReference type="FunFam" id="1.10.3730.20:FF:000002">
    <property type="entry name" value="Probable 4-amino-4-deoxy-L-arabinose-phosphoundecaprenol flippase subunit ArnE"/>
    <property type="match status" value="1"/>
</dbReference>
<dbReference type="Gene3D" id="1.10.3730.20">
    <property type="match status" value="1"/>
</dbReference>
<dbReference type="HAMAP" id="MF_01869">
    <property type="entry name" value="Flippase_ArnE"/>
    <property type="match status" value="1"/>
</dbReference>
<dbReference type="InterPro" id="IPR000620">
    <property type="entry name" value="EamA_dom"/>
</dbReference>
<dbReference type="InterPro" id="IPR022883">
    <property type="entry name" value="Flippase_ArnE"/>
</dbReference>
<dbReference type="InterPro" id="IPR000390">
    <property type="entry name" value="Small_drug/metabolite_transptr"/>
</dbReference>
<dbReference type="NCBIfam" id="NF011625">
    <property type="entry name" value="PRK15051.1"/>
    <property type="match status" value="1"/>
</dbReference>
<dbReference type="PANTHER" id="PTHR30561:SF23">
    <property type="entry name" value="4-AMINO-4-DEOXY-L-ARABINOSE-PHOSPHOUNDECAPRENOL FLIPPASE SUBUNIT ARNE-RELATED"/>
    <property type="match status" value="1"/>
</dbReference>
<dbReference type="PANTHER" id="PTHR30561">
    <property type="entry name" value="SMR FAMILY PROTON-DEPENDENT DRUG EFFLUX TRANSPORTER SUGE"/>
    <property type="match status" value="1"/>
</dbReference>
<dbReference type="Pfam" id="PF00892">
    <property type="entry name" value="EamA"/>
    <property type="match status" value="1"/>
</dbReference>
<dbReference type="SUPFAM" id="SSF103481">
    <property type="entry name" value="Multidrug resistance efflux transporter EmrE"/>
    <property type="match status" value="1"/>
</dbReference>
<name>ARNE_ECO45</name>
<sequence>MIWLTLVFASLLSVAGQLCQKQATCFAAVNKRRKHIVLWLGLALACLGLAMVLWLLVLQNVPVGIAYPMLSLNFVWVTLAAVKLWHEPVSLRHWCGVAFIIGGIVILGSTV</sequence>
<keyword id="KW-0997">Cell inner membrane</keyword>
<keyword id="KW-1003">Cell membrane</keyword>
<keyword id="KW-0441">Lipid A biosynthesis</keyword>
<keyword id="KW-0444">Lipid biosynthesis</keyword>
<keyword id="KW-0443">Lipid metabolism</keyword>
<keyword id="KW-0448">Lipopolysaccharide biosynthesis</keyword>
<keyword id="KW-0472">Membrane</keyword>
<keyword id="KW-1185">Reference proteome</keyword>
<keyword id="KW-0812">Transmembrane</keyword>
<keyword id="KW-1133">Transmembrane helix</keyword>
<keyword id="KW-0813">Transport</keyword>
<accession>B7MG25</accession>
<protein>
    <recommendedName>
        <fullName evidence="2">Probable 4-amino-4-deoxy-L-arabinose-phosphoundecaprenol flippase subunit ArnE</fullName>
        <shortName evidence="2">L-Ara4N-phosphoundecaprenol flippase subunit ArnE</shortName>
    </recommendedName>
    <alternativeName>
        <fullName evidence="2">Undecaprenyl phosphate-aminoarabinose flippase subunit ArnE</fullName>
    </alternativeName>
</protein>
<organism>
    <name type="scientific">Escherichia coli O45:K1 (strain S88 / ExPEC)</name>
    <dbReference type="NCBI Taxonomy" id="585035"/>
    <lineage>
        <taxon>Bacteria</taxon>
        <taxon>Pseudomonadati</taxon>
        <taxon>Pseudomonadota</taxon>
        <taxon>Gammaproteobacteria</taxon>
        <taxon>Enterobacterales</taxon>
        <taxon>Enterobacteriaceae</taxon>
        <taxon>Escherichia</taxon>
    </lineage>
</organism>
<feature type="chain" id="PRO_0000382968" description="Probable 4-amino-4-deoxy-L-arabinose-phosphoundecaprenol flippase subunit ArnE">
    <location>
        <begin position="1"/>
        <end position="111"/>
    </location>
</feature>
<feature type="topological domain" description="Cytoplasmic" evidence="1">
    <location>
        <begin position="1"/>
        <end position="35"/>
    </location>
</feature>
<feature type="transmembrane region" description="Helical" evidence="2">
    <location>
        <begin position="36"/>
        <end position="56"/>
    </location>
</feature>
<feature type="topological domain" description="Periplasmic" evidence="1">
    <location>
        <begin position="57"/>
        <end position="60"/>
    </location>
</feature>
<feature type="transmembrane region" description="Helical" evidence="2">
    <location>
        <begin position="61"/>
        <end position="81"/>
    </location>
</feature>
<feature type="topological domain" description="Cytoplasmic" evidence="1">
    <location>
        <begin position="82"/>
        <end position="87"/>
    </location>
</feature>
<feature type="transmembrane region" description="Helical" evidence="2">
    <location>
        <begin position="88"/>
        <end position="108"/>
    </location>
</feature>
<feature type="topological domain" description="Periplasmic" evidence="1">
    <location>
        <begin position="109"/>
        <end position="111"/>
    </location>
</feature>
<feature type="domain" description="EamA" evidence="2">
    <location>
        <begin position="40"/>
        <end position="109"/>
    </location>
</feature>
<comment type="function">
    <text evidence="2">Translocates 4-amino-4-deoxy-L-arabinose-phosphoundecaprenol (alpha-L-Ara4N-phosphoundecaprenol) from the cytoplasmic to the periplasmic side of the inner membrane.</text>
</comment>
<comment type="pathway">
    <text evidence="2">Bacterial outer membrane biogenesis; lipopolysaccharide biosynthesis.</text>
</comment>
<comment type="subunit">
    <text evidence="2">Heterodimer of ArnE and ArnF.</text>
</comment>
<comment type="subcellular location">
    <subcellularLocation>
        <location evidence="2">Cell inner membrane</location>
        <topology evidence="2">Multi-pass membrane protein</topology>
    </subcellularLocation>
</comment>
<comment type="similarity">
    <text evidence="2">Belongs to the ArnE family.</text>
</comment>